<sequence length="922" mass="105659">MASAATTTHFPSSRIPSEPCASSGPLFPDDVLFTTEASSASSSSCHVENDSRPLSPTMFTDGRTPVNISAKHLKDHPLHEPTGTSEVLTFYPTMREFKNFSQYIKKIEQNGGHLKAGIAKIVAPEGWTPRPTRKDFSDVDDYEITQPARETIEATEKPGAYFKRNVTCRRKMPVREFRTLANSAQYRNPRPDLKGSEIEKHYFDNILHGEPIYGADTEGSFYDAQVEEWNMNRLGTILEDTNYEIKGVNTVYLYFGMYKTTFPWHAEDMDLYSINFLHFGAPKYWFAISSEHADRFERFMSQQFSYQNEYAPQCKAFLRHKTYLVTPELLRQAGIPYATMVQRPNEFIITFPRGYHMGFNLGYNLAESTNFASQRWIDYGKDAVLCDCNKDSVKIDMTHFMAKYRPDEYTTWWTYWYGGGRELWIPKKKKEVPKKRRQSLADASKIAKRARLGASSTATDSDGSSGSSGSEEATEGSSFMRALPAGYTVHNWQLRPDYDELLRKYKKETKLLRSDTRIDFYQEREFNHARRAEWPHCAVCQYFQPPHMNAINHTVPNSSRRLIPKWCFSKTDTKKHEDHHEPPPPLDRLLTCSNCHVTVHSHCCSGGGGGGGDDDDVTSSGEPWRCPRCRNRTDVEIRTTSCQLCELRGGALIPCQIGTDSTWAHVACALFNRRAIFDCPNRPGACFVEPSPRQQSETPRMPPRRLSEEYRAELGDLYENSRWECVVCHRTDEGLAPCVLCIEEQATTSLPTLAHVTCARRVGFVCEVRDYPRGVVMICHKHEHSYLVNKTTQQQAYTNVKVGDFVFVEDVVEPPQKLFTRGAIVRADKKETVVVDFLDNSCSRDNHVEDIISCECLFCENGDHQYGARVKVVWDDKQVYDAYFRGKGQMIEYTVRLEDGREVRHPRNRLKTKRELNAYLKK</sequence>
<organism>
    <name type="scientific">Caenorhabditis elegans</name>
    <dbReference type="NCBI Taxonomy" id="6239"/>
    <lineage>
        <taxon>Eukaryota</taxon>
        <taxon>Metazoa</taxon>
        <taxon>Ecdysozoa</taxon>
        <taxon>Nematoda</taxon>
        <taxon>Chromadorea</taxon>
        <taxon>Rhabditida</taxon>
        <taxon>Rhabditina</taxon>
        <taxon>Rhabditomorpha</taxon>
        <taxon>Rhabditoidea</taxon>
        <taxon>Rhabditidae</taxon>
        <taxon>Peloderinae</taxon>
        <taxon>Caenorhabditis</taxon>
    </lineage>
</organism>
<reference key="1">
    <citation type="journal article" date="1998" name="Science">
        <title>Genome sequence of the nematode C. elegans: a platform for investigating biology.</title>
        <authorList>
            <consortium name="The C. elegans sequencing consortium"/>
        </authorList>
    </citation>
    <scope>NUCLEOTIDE SEQUENCE [LARGE SCALE GENOMIC DNA]</scope>
    <source>
        <strain>Bristol N2</strain>
    </source>
</reference>
<reference key="2">
    <citation type="journal article" date="2006" name="Cell">
        <title>Reversal of histone lysine trimethylation by the JMJD2 family of histone demethylases.</title>
        <authorList>
            <person name="Whetstine J.R."/>
            <person name="Nottke A."/>
            <person name="Lan F."/>
            <person name="Huarte M."/>
            <person name="Smolikov S."/>
            <person name="Chen Z."/>
            <person name="Spooner E."/>
            <person name="Li E."/>
            <person name="Zhang G."/>
            <person name="Colaiacovo M."/>
            <person name="Shi Y."/>
        </authorList>
    </citation>
    <scope>FUNCTION</scope>
    <scope>DISRUPTION PHENOTYPE</scope>
</reference>
<reference key="3">
    <citation type="journal article" date="2012" name="Aging Cell">
        <title>Two SET domain containing genes link epigenetic changes and aging in Caenorhabditis elegans.</title>
        <authorList>
            <person name="Ni Z."/>
            <person name="Ebata A."/>
            <person name="Alipanahiramandi E."/>
            <person name="Lee S.S."/>
        </authorList>
    </citation>
    <scope>FUNCTION</scope>
    <scope>DISRUPTION PHENOTYPE</scope>
</reference>
<reference key="4">
    <citation type="journal article" date="2014" name="Cell Rep.">
        <title>A histone methylation network regulates transgenerational epigenetic memory in C. elegans.</title>
        <authorList>
            <person name="Greer E.L."/>
            <person name="Beese-Sims S.E."/>
            <person name="Brookes E."/>
            <person name="Spadafora R."/>
            <person name="Zhu Y."/>
            <person name="Rothbart S.B."/>
            <person name="Aristizabal-Corrales D."/>
            <person name="Chen S."/>
            <person name="Badeaux A.I."/>
            <person name="Jin Q."/>
            <person name="Wang W."/>
            <person name="Strahl B.D."/>
            <person name="Colaiacovo M.P."/>
            <person name="Shi Y."/>
        </authorList>
    </citation>
    <scope>FUNCTION</scope>
    <scope>DISRUPTION PHENOTYPE</scope>
</reference>
<evidence type="ECO:0000250" key="1"/>
<evidence type="ECO:0000250" key="2">
    <source>
        <dbReference type="UniProtKB" id="B2RXH2"/>
    </source>
</evidence>
<evidence type="ECO:0000255" key="3">
    <source>
        <dbReference type="PROSITE-ProRule" id="PRU00537"/>
    </source>
</evidence>
<evidence type="ECO:0000255" key="4">
    <source>
        <dbReference type="PROSITE-ProRule" id="PRU00538"/>
    </source>
</evidence>
<evidence type="ECO:0000255" key="5">
    <source>
        <dbReference type="PROSITE-ProRule" id="PRU01146"/>
    </source>
</evidence>
<evidence type="ECO:0000256" key="6">
    <source>
        <dbReference type="SAM" id="MobiDB-lite"/>
    </source>
</evidence>
<evidence type="ECO:0000269" key="7">
    <source>
    </source>
</evidence>
<evidence type="ECO:0000269" key="8">
    <source>
    </source>
</evidence>
<evidence type="ECO:0000269" key="9">
    <source>
    </source>
</evidence>
<evidence type="ECO:0000305" key="10"/>
<evidence type="ECO:0000305" key="11">
    <source>
    </source>
</evidence>
<feature type="chain" id="PRO_0000234378" description="Lysine-specific demethylase 4">
    <location>
        <begin position="1"/>
        <end position="922"/>
    </location>
</feature>
<feature type="domain" description="JmjN" evidence="3">
    <location>
        <begin position="87"/>
        <end position="130"/>
    </location>
</feature>
<feature type="domain" description="JmjC" evidence="4">
    <location>
        <begin position="223"/>
        <end position="388"/>
    </location>
</feature>
<feature type="zinc finger region" description="C2HC pre-PHD-type" evidence="5">
    <location>
        <begin position="639"/>
        <end position="675"/>
    </location>
</feature>
<feature type="zinc finger region" description="PHD-type; degenerate" evidence="5">
    <location>
        <begin position="723"/>
        <end position="783"/>
    </location>
</feature>
<feature type="region of interest" description="Disordered" evidence="6">
    <location>
        <begin position="1"/>
        <end position="21"/>
    </location>
</feature>
<feature type="region of interest" description="Disordered" evidence="6">
    <location>
        <begin position="42"/>
        <end position="61"/>
    </location>
</feature>
<feature type="region of interest" description="Disordered" evidence="6">
    <location>
        <begin position="435"/>
        <end position="475"/>
    </location>
</feature>
<feature type="compositionally biased region" description="Polar residues" evidence="6">
    <location>
        <begin position="1"/>
        <end position="15"/>
    </location>
</feature>
<feature type="compositionally biased region" description="Low complexity" evidence="6">
    <location>
        <begin position="453"/>
        <end position="475"/>
    </location>
</feature>
<feature type="binding site" evidence="2">
    <location>
        <position position="213"/>
    </location>
    <ligand>
        <name>2-oxoglutarate</name>
        <dbReference type="ChEBI" id="CHEBI:16810"/>
    </ligand>
</feature>
<feature type="binding site" evidence="4">
    <location>
        <position position="265"/>
    </location>
    <ligand>
        <name>Fe cation</name>
        <dbReference type="ChEBI" id="CHEBI:24875"/>
        <note>catalytic</note>
    </ligand>
</feature>
<feature type="binding site" evidence="4">
    <location>
        <position position="267"/>
    </location>
    <ligand>
        <name>Fe cation</name>
        <dbReference type="ChEBI" id="CHEBI:24875"/>
        <note>catalytic</note>
    </ligand>
</feature>
<feature type="binding site" evidence="2">
    <location>
        <position position="275"/>
    </location>
    <ligand>
        <name>2-oxoglutarate</name>
        <dbReference type="ChEBI" id="CHEBI:16810"/>
    </ligand>
</feature>
<feature type="binding site" evidence="2">
    <location>
        <position position="283"/>
    </location>
    <ligand>
        <name>2-oxoglutarate</name>
        <dbReference type="ChEBI" id="CHEBI:16810"/>
    </ligand>
</feature>
<feature type="binding site" evidence="1">
    <location>
        <position position="314"/>
    </location>
    <ligand>
        <name>Zn(2+)</name>
        <dbReference type="ChEBI" id="CHEBI:29105"/>
    </ligand>
</feature>
<feature type="binding site" evidence="1">
    <location>
        <position position="320"/>
    </location>
    <ligand>
        <name>Zn(2+)</name>
        <dbReference type="ChEBI" id="CHEBI:29105"/>
    </ligand>
</feature>
<feature type="binding site" evidence="2">
    <location>
        <position position="321"/>
    </location>
    <ligand>
        <name>2-oxoglutarate</name>
        <dbReference type="ChEBI" id="CHEBI:16810"/>
    </ligand>
</feature>
<feature type="binding site" evidence="4">
    <location>
        <position position="356"/>
    </location>
    <ligand>
        <name>Fe cation</name>
        <dbReference type="ChEBI" id="CHEBI:24875"/>
        <note>catalytic</note>
    </ligand>
</feature>
<feature type="binding site" evidence="1">
    <location>
        <position position="386"/>
    </location>
    <ligand>
        <name>Zn(2+)</name>
        <dbReference type="ChEBI" id="CHEBI:29105"/>
    </ligand>
</feature>
<feature type="binding site" evidence="1">
    <location>
        <position position="388"/>
    </location>
    <ligand>
        <name>Zn(2+)</name>
        <dbReference type="ChEBI" id="CHEBI:29105"/>
    </ligand>
</feature>
<dbReference type="EC" id="1.14.11.66" evidence="11"/>
<dbReference type="EC" id="1.14.11.69" evidence="11"/>
<dbReference type="EMBL" id="AL110490">
    <property type="protein sequence ID" value="CAB54451.2"/>
    <property type="molecule type" value="Genomic_DNA"/>
</dbReference>
<dbReference type="PIR" id="T27007">
    <property type="entry name" value="T27007"/>
</dbReference>
<dbReference type="RefSeq" id="NP_496969.2">
    <property type="nucleotide sequence ID" value="NM_064568.6"/>
</dbReference>
<dbReference type="SMR" id="Q9U297"/>
<dbReference type="BioGRID" id="40361">
    <property type="interactions" value="2"/>
</dbReference>
<dbReference type="DIP" id="DIP-26971N"/>
<dbReference type="FunCoup" id="Q9U297">
    <property type="interactions" value="1563"/>
</dbReference>
<dbReference type="STRING" id="6239.Y48B6A.11.1"/>
<dbReference type="iPTMnet" id="Q9U297"/>
<dbReference type="PaxDb" id="6239-Y48B6A.11"/>
<dbReference type="PeptideAtlas" id="Q9U297"/>
<dbReference type="EnsemblMetazoa" id="Y48B6A.11.1">
    <property type="protein sequence ID" value="Y48B6A.11.1"/>
    <property type="gene ID" value="WBGene00012982"/>
</dbReference>
<dbReference type="GeneID" id="175080"/>
<dbReference type="KEGG" id="cel:CELE_Y48B6A.11"/>
<dbReference type="UCSC" id="Y48B6A.11">
    <property type="organism name" value="c. elegans"/>
</dbReference>
<dbReference type="AGR" id="WB:WBGene00012982"/>
<dbReference type="CTD" id="175080"/>
<dbReference type="WormBase" id="Y48B6A.11">
    <property type="protein sequence ID" value="CE41181"/>
    <property type="gene ID" value="WBGene00012982"/>
    <property type="gene designation" value="jmjd-2"/>
</dbReference>
<dbReference type="eggNOG" id="KOG0958">
    <property type="taxonomic scope" value="Eukaryota"/>
</dbReference>
<dbReference type="GeneTree" id="ENSGT00940000154930"/>
<dbReference type="HOGENOM" id="CLU_001442_0_1_1"/>
<dbReference type="InParanoid" id="Q9U297"/>
<dbReference type="OMA" id="VHEGCYP"/>
<dbReference type="OrthoDB" id="9547406at2759"/>
<dbReference type="PhylomeDB" id="Q9U297"/>
<dbReference type="BRENDA" id="1.14.11.69">
    <property type="organism ID" value="1045"/>
</dbReference>
<dbReference type="Reactome" id="R-CEL-3214842">
    <property type="pathway name" value="HDMs demethylate histones"/>
</dbReference>
<dbReference type="PRO" id="PR:Q9U297"/>
<dbReference type="Proteomes" id="UP000001940">
    <property type="component" value="Chromosome II"/>
</dbReference>
<dbReference type="Bgee" id="WBGene00012982">
    <property type="expression patterns" value="Expressed in embryo and 4 other cell types or tissues"/>
</dbReference>
<dbReference type="GO" id="GO:0000785">
    <property type="term" value="C:chromatin"/>
    <property type="evidence" value="ECO:0000318"/>
    <property type="project" value="GO_Central"/>
</dbReference>
<dbReference type="GO" id="GO:0005634">
    <property type="term" value="C:nucleus"/>
    <property type="evidence" value="ECO:0000250"/>
    <property type="project" value="UniProtKB"/>
</dbReference>
<dbReference type="GO" id="GO:0051864">
    <property type="term" value="F:histone H3K36 demethylase activity"/>
    <property type="evidence" value="ECO:0000315"/>
    <property type="project" value="UniProtKB"/>
</dbReference>
<dbReference type="GO" id="GO:0140680">
    <property type="term" value="F:histone H3K36me/H3K36me2 demethylase activity"/>
    <property type="evidence" value="ECO:0000314"/>
    <property type="project" value="WormBase"/>
</dbReference>
<dbReference type="GO" id="GO:0140681">
    <property type="term" value="F:histone H3K36me2/H3K36me3 demethylase activity"/>
    <property type="evidence" value="ECO:0007669"/>
    <property type="project" value="UniProtKB-EC"/>
</dbReference>
<dbReference type="GO" id="GO:0032454">
    <property type="term" value="F:histone H3K9 demethylase activity"/>
    <property type="evidence" value="ECO:0000318"/>
    <property type="project" value="GO_Central"/>
</dbReference>
<dbReference type="GO" id="GO:0140684">
    <property type="term" value="F:histone H3K9me2/H3K9me3 demethylase activity"/>
    <property type="evidence" value="ECO:0000314"/>
    <property type="project" value="WormBase"/>
</dbReference>
<dbReference type="GO" id="GO:0008270">
    <property type="term" value="F:zinc ion binding"/>
    <property type="evidence" value="ECO:0007669"/>
    <property type="project" value="UniProtKB-KW"/>
</dbReference>
<dbReference type="GO" id="GO:0006338">
    <property type="term" value="P:chromatin remodeling"/>
    <property type="evidence" value="ECO:0000318"/>
    <property type="project" value="GO_Central"/>
</dbReference>
<dbReference type="GO" id="GO:0045892">
    <property type="term" value="P:negative regulation of DNA-templated transcription"/>
    <property type="evidence" value="ECO:0000250"/>
    <property type="project" value="UniProtKB"/>
</dbReference>
<dbReference type="GO" id="GO:0010468">
    <property type="term" value="P:regulation of gene expression"/>
    <property type="evidence" value="ECO:0000318"/>
    <property type="project" value="GO_Central"/>
</dbReference>
<dbReference type="CDD" id="cd15571">
    <property type="entry name" value="ePHD"/>
    <property type="match status" value="1"/>
</dbReference>
<dbReference type="FunFam" id="2.60.120.650:FF:000089">
    <property type="entry name" value="Lysine-specific demethylase 4"/>
    <property type="match status" value="1"/>
</dbReference>
<dbReference type="FunFam" id="3.10.330.70:FF:000001">
    <property type="entry name" value="Putative lysine-specific demethylase 4a"/>
    <property type="match status" value="1"/>
</dbReference>
<dbReference type="Gene3D" id="3.10.330.70">
    <property type="match status" value="1"/>
</dbReference>
<dbReference type="Gene3D" id="2.60.120.650">
    <property type="entry name" value="Cupin"/>
    <property type="match status" value="1"/>
</dbReference>
<dbReference type="InterPro" id="IPR034732">
    <property type="entry name" value="EPHD"/>
</dbReference>
<dbReference type="InterPro" id="IPR003347">
    <property type="entry name" value="JmjC_dom"/>
</dbReference>
<dbReference type="InterPro" id="IPR003349">
    <property type="entry name" value="JmjN"/>
</dbReference>
<dbReference type="PANTHER" id="PTHR10694">
    <property type="entry name" value="LYSINE-SPECIFIC DEMETHYLASE"/>
    <property type="match status" value="1"/>
</dbReference>
<dbReference type="PANTHER" id="PTHR10694:SF129">
    <property type="entry name" value="LYSINE-SPECIFIC DEMETHYLASE 4B-RELATED"/>
    <property type="match status" value="1"/>
</dbReference>
<dbReference type="Pfam" id="PF02373">
    <property type="entry name" value="JmjC"/>
    <property type="match status" value="1"/>
</dbReference>
<dbReference type="Pfam" id="PF02375">
    <property type="entry name" value="JmjN"/>
    <property type="match status" value="1"/>
</dbReference>
<dbReference type="SMART" id="SM00558">
    <property type="entry name" value="JmjC"/>
    <property type="match status" value="1"/>
</dbReference>
<dbReference type="SMART" id="SM00545">
    <property type="entry name" value="JmjN"/>
    <property type="match status" value="1"/>
</dbReference>
<dbReference type="SUPFAM" id="SSF51197">
    <property type="entry name" value="Clavaminate synthase-like"/>
    <property type="match status" value="1"/>
</dbReference>
<dbReference type="PROSITE" id="PS51805">
    <property type="entry name" value="EPHD"/>
    <property type="match status" value="1"/>
</dbReference>
<dbReference type="PROSITE" id="PS51184">
    <property type="entry name" value="JMJC"/>
    <property type="match status" value="1"/>
</dbReference>
<dbReference type="PROSITE" id="PS51183">
    <property type="entry name" value="JMJN"/>
    <property type="match status" value="1"/>
</dbReference>
<comment type="function">
    <text evidence="7 8 9">Histone demethylase that specifically demethylates 'Lys-9' and 'Lys-36' residues of histone H3, thereby playing a central role in histone code (PubMed:16603238, PubMed:24685137). Demethylation of Lys residue generates formaldehyde and succinate. Involved in the negative regulation of lifespan in a germline-dependent fashion (PubMed:22212395).</text>
</comment>
<comment type="catalytic activity">
    <reaction evidence="11">
        <text>N(6),N(6),N(6)-trimethyl-L-lysyl(9)-[histone H3] + 2 2-oxoglutarate + 2 O2 = N(6)-methyl-L-lysyl(9)-[histone H3] + 2 formaldehyde + 2 succinate + 2 CO2</text>
        <dbReference type="Rhea" id="RHEA:60200"/>
        <dbReference type="Rhea" id="RHEA-COMP:15538"/>
        <dbReference type="Rhea" id="RHEA-COMP:15542"/>
        <dbReference type="ChEBI" id="CHEBI:15379"/>
        <dbReference type="ChEBI" id="CHEBI:16526"/>
        <dbReference type="ChEBI" id="CHEBI:16810"/>
        <dbReference type="ChEBI" id="CHEBI:16842"/>
        <dbReference type="ChEBI" id="CHEBI:30031"/>
        <dbReference type="ChEBI" id="CHEBI:61929"/>
        <dbReference type="ChEBI" id="CHEBI:61961"/>
        <dbReference type="EC" id="1.14.11.66"/>
    </reaction>
</comment>
<comment type="catalytic activity">
    <reaction evidence="11">
        <text>N(6),N(6),N(6)-trimethyl-L-lysyl(36)-[histone H3] + 2 2-oxoglutarate + 2 O2 = N(6)-methyl-L-lysyl(36)-[histone H3] + 2 formaldehyde + 2 succinate + 2 CO2</text>
        <dbReference type="Rhea" id="RHEA:60236"/>
        <dbReference type="Rhea" id="RHEA-COMP:9786"/>
        <dbReference type="Rhea" id="RHEA-COMP:15536"/>
        <dbReference type="ChEBI" id="CHEBI:15379"/>
        <dbReference type="ChEBI" id="CHEBI:16526"/>
        <dbReference type="ChEBI" id="CHEBI:16810"/>
        <dbReference type="ChEBI" id="CHEBI:16842"/>
        <dbReference type="ChEBI" id="CHEBI:30031"/>
        <dbReference type="ChEBI" id="CHEBI:61929"/>
        <dbReference type="ChEBI" id="CHEBI:61961"/>
        <dbReference type="EC" id="1.14.11.69"/>
    </reaction>
</comment>
<comment type="cofactor">
    <cofactor evidence="1">
        <name>Fe(2+)</name>
        <dbReference type="ChEBI" id="CHEBI:29033"/>
    </cofactor>
    <text evidence="1">Binds 1 Fe(2+) ion per subunit.</text>
</comment>
<comment type="subcellular location">
    <subcellularLocation>
        <location evidence="3">Nucleus</location>
    </subcellularLocation>
</comment>
<comment type="disruption phenotype">
    <text evidence="7 8 9">Increased H3 'Lys-9' and 'Lys-36' trimethylation levels on meiotic chromosomes leading to trigger p53-dependent germline apoptosis (PubMed:16603238). In spr-5 null mutants, suppresses the progressive sterility over generations which is seen in spr-5 mutants (PubMed:24685137). RNAi-mediated knockdown results in extended lifespan (PubMed:22212395).</text>
</comment>
<comment type="similarity">
    <text evidence="10">Belongs to the JHDM3 histone demethylase family.</text>
</comment>
<protein>
    <recommendedName>
        <fullName>Lysine-specific demethylase 4</fullName>
        <ecNumber evidence="11">1.14.11.66</ecNumber>
        <ecNumber evidence="11">1.14.11.69</ecNumber>
    </recommendedName>
    <alternativeName>
        <fullName>JmjC domain-containing histone demethylation protein 2</fullName>
        <shortName>ceJMJD2</shortName>
    </alternativeName>
    <alternativeName>
        <fullName evidence="10">[histone H3]-trimethyl-L-lysine(36) demethylase 4</fullName>
    </alternativeName>
    <alternativeName>
        <fullName evidence="10">[histone H3]-trimethyl-L-lysine(9) demethylase 4</fullName>
    </alternativeName>
</protein>
<name>KDM4_CAEEL</name>
<proteinExistence type="inferred from homology"/>
<gene>
    <name type="primary">jmjd-2</name>
    <name type="ORF">Y48B6A.11</name>
</gene>
<keyword id="KW-0156">Chromatin regulator</keyword>
<keyword id="KW-0223">Dioxygenase</keyword>
<keyword id="KW-0408">Iron</keyword>
<keyword id="KW-0479">Metal-binding</keyword>
<keyword id="KW-0539">Nucleus</keyword>
<keyword id="KW-0560">Oxidoreductase</keyword>
<keyword id="KW-1185">Reference proteome</keyword>
<keyword id="KW-0804">Transcription</keyword>
<keyword id="KW-0805">Transcription regulation</keyword>
<keyword id="KW-0862">Zinc</keyword>
<keyword id="KW-0863">Zinc-finger</keyword>
<accession>Q9U297</accession>